<organism>
    <name type="scientific">Potamon potamios</name>
    <dbReference type="NCBI Taxonomy" id="59185"/>
    <lineage>
        <taxon>Eukaryota</taxon>
        <taxon>Metazoa</taxon>
        <taxon>Ecdysozoa</taxon>
        <taxon>Arthropoda</taxon>
        <taxon>Crustacea</taxon>
        <taxon>Multicrustacea</taxon>
        <taxon>Malacostraca</taxon>
        <taxon>Eumalacostraca</taxon>
        <taxon>Eucarida</taxon>
        <taxon>Decapoda</taxon>
        <taxon>Pleocyemata</taxon>
        <taxon>Brachyura</taxon>
        <taxon>Eubrachyura</taxon>
        <taxon>Potamoidea</taxon>
        <taxon>Potamidae</taxon>
        <taxon>Potamon</taxon>
    </lineage>
</organism>
<keyword id="KW-0104">Cadmium</keyword>
<keyword id="KW-0903">Direct protein sequencing</keyword>
<keyword id="KW-0479">Metal-binding</keyword>
<keyword id="KW-0480">Metal-thiolate cluster</keyword>
<feature type="chain" id="PRO_0000197344" description="Metallothionein">
    <location>
        <begin position="1"/>
        <end position="58"/>
    </location>
</feature>
<feature type="region of interest" description="Beta">
    <location>
        <begin position="1"/>
        <end position="29"/>
    </location>
</feature>
<feature type="region of interest" description="Alpha">
    <location>
        <begin position="30"/>
        <end position="58"/>
    </location>
</feature>
<feature type="binding site" evidence="1">
    <location>
        <position position="4"/>
    </location>
    <ligand>
        <name>a divalent metal cation</name>
        <dbReference type="ChEBI" id="CHEBI:60240"/>
        <label>1</label>
        <note>in cluster B</note>
    </ligand>
</feature>
<feature type="binding site" evidence="1">
    <location>
        <position position="5"/>
    </location>
    <ligand>
        <name>a divalent metal cation</name>
        <dbReference type="ChEBI" id="CHEBI:60240"/>
        <label>1</label>
        <note>in cluster B</note>
    </ligand>
</feature>
<feature type="binding site" evidence="1">
    <location>
        <position position="5"/>
    </location>
    <ligand>
        <name>a divalent metal cation</name>
        <dbReference type="ChEBI" id="CHEBI:60240"/>
        <label>2</label>
        <note>in cluster B</note>
    </ligand>
</feature>
<feature type="binding site" evidence="1">
    <location>
        <position position="10"/>
    </location>
    <ligand>
        <name>a divalent metal cation</name>
        <dbReference type="ChEBI" id="CHEBI:60240"/>
        <label>2</label>
        <note>in cluster B</note>
    </ligand>
</feature>
<feature type="binding site" evidence="1">
    <location>
        <position position="12"/>
    </location>
    <ligand>
        <name>a divalent metal cation</name>
        <dbReference type="ChEBI" id="CHEBI:60240"/>
        <label>3</label>
        <note>in cluster B</note>
    </ligand>
</feature>
<feature type="binding site" evidence="1">
    <location>
        <position position="17"/>
    </location>
    <ligand>
        <name>a divalent metal cation</name>
        <dbReference type="ChEBI" id="CHEBI:60240"/>
        <label>1</label>
        <note>in cluster B</note>
    </ligand>
</feature>
<feature type="binding site" evidence="1">
    <location>
        <position position="17"/>
    </location>
    <ligand>
        <name>a divalent metal cation</name>
        <dbReference type="ChEBI" id="CHEBI:60240"/>
        <label>3</label>
        <note>in cluster B</note>
    </ligand>
</feature>
<feature type="binding site" evidence="1">
    <location>
        <position position="21"/>
    </location>
    <ligand>
        <name>a divalent metal cation</name>
        <dbReference type="ChEBI" id="CHEBI:60240"/>
        <label>1</label>
        <note>in cluster B</note>
    </ligand>
</feature>
<feature type="binding site" evidence="1">
    <location>
        <position position="23"/>
    </location>
    <ligand>
        <name>a divalent metal cation</name>
        <dbReference type="ChEBI" id="CHEBI:60240"/>
        <label>2</label>
        <note>in cluster B</note>
    </ligand>
</feature>
<feature type="binding site" evidence="1">
    <location>
        <position position="26"/>
    </location>
    <ligand>
        <name>a divalent metal cation</name>
        <dbReference type="ChEBI" id="CHEBI:60240"/>
        <label>2</label>
        <note>in cluster B</note>
    </ligand>
</feature>
<feature type="binding site" evidence="1">
    <location>
        <position position="26"/>
    </location>
    <ligand>
        <name>a divalent metal cation</name>
        <dbReference type="ChEBI" id="CHEBI:60240"/>
        <label>3</label>
        <note>in cluster B</note>
    </ligand>
</feature>
<feature type="binding site" evidence="1">
    <location>
        <position position="28"/>
    </location>
    <ligand>
        <name>a divalent metal cation</name>
        <dbReference type="ChEBI" id="CHEBI:60240"/>
        <label>3</label>
        <note>in cluster B</note>
    </ligand>
</feature>
<feature type="binding site" evidence="1">
    <location>
        <position position="31"/>
    </location>
    <ligand>
        <name>a divalent metal cation</name>
        <dbReference type="ChEBI" id="CHEBI:60240"/>
        <label>4</label>
        <note>in cluster A</note>
    </ligand>
</feature>
<feature type="binding site" evidence="1">
    <location>
        <position position="34"/>
    </location>
    <ligand>
        <name>a divalent metal cation</name>
        <dbReference type="ChEBI" id="CHEBI:60240"/>
        <label>4</label>
        <note>in cluster A</note>
    </ligand>
</feature>
<feature type="binding site" evidence="1">
    <location>
        <position position="34"/>
    </location>
    <ligand>
        <name>a divalent metal cation</name>
        <dbReference type="ChEBI" id="CHEBI:60240"/>
        <label>5</label>
        <note>in cluster A</note>
    </ligand>
</feature>
<feature type="binding site" evidence="1">
    <location>
        <position position="38"/>
    </location>
    <ligand>
        <name>a divalent metal cation</name>
        <dbReference type="ChEBI" id="CHEBI:60240"/>
        <label>5</label>
        <note>in cluster A</note>
    </ligand>
</feature>
<feature type="binding site" evidence="1">
    <location>
        <position position="40"/>
    </location>
    <ligand>
        <name>a divalent metal cation</name>
        <dbReference type="ChEBI" id="CHEBI:60240"/>
        <label>6</label>
        <note>in cluster A</note>
    </ligand>
</feature>
<feature type="binding site" evidence="1">
    <location>
        <position position="46"/>
    </location>
    <ligand>
        <name>a divalent metal cation</name>
        <dbReference type="ChEBI" id="CHEBI:60240"/>
        <label>6</label>
        <note>in cluster A</note>
    </ligand>
</feature>
<feature type="binding site" evidence="1">
    <location>
        <position position="50"/>
    </location>
    <ligand>
        <name>a divalent metal cation</name>
        <dbReference type="ChEBI" id="CHEBI:60240"/>
        <label>4</label>
        <note>in cluster A</note>
    </ligand>
</feature>
<feature type="binding site" evidence="1">
    <location>
        <position position="50"/>
    </location>
    <ligand>
        <name>a divalent metal cation</name>
        <dbReference type="ChEBI" id="CHEBI:60240"/>
        <label>6</label>
        <note>in cluster A</note>
    </ligand>
</feature>
<feature type="binding site" evidence="1">
    <location>
        <position position="54"/>
    </location>
    <ligand>
        <name>a divalent metal cation</name>
        <dbReference type="ChEBI" id="CHEBI:60240"/>
        <label>4</label>
        <note>in cluster A</note>
    </ligand>
</feature>
<feature type="binding site" evidence="1">
    <location>
        <position position="56"/>
    </location>
    <ligand>
        <name>a divalent metal cation</name>
        <dbReference type="ChEBI" id="CHEBI:60240"/>
        <label>5</label>
        <note>in cluster A</note>
    </ligand>
</feature>
<feature type="binding site" evidence="1">
    <location>
        <position position="57"/>
    </location>
    <ligand>
        <name>a divalent metal cation</name>
        <dbReference type="ChEBI" id="CHEBI:60240"/>
        <label>5</label>
        <note>in cluster A</note>
    </ligand>
</feature>
<feature type="binding site" evidence="1">
    <location>
        <position position="57"/>
    </location>
    <ligand>
        <name>a divalent metal cation</name>
        <dbReference type="ChEBI" id="CHEBI:60240"/>
        <label>6</label>
        <note>in cluster A</note>
    </ligand>
</feature>
<dbReference type="SMR" id="P55952"/>
<dbReference type="GO" id="GO:0046872">
    <property type="term" value="F:metal ion binding"/>
    <property type="evidence" value="ECO:0007669"/>
    <property type="project" value="UniProtKB-KW"/>
</dbReference>
<dbReference type="InterPro" id="IPR002045">
    <property type="entry name" value="Metalthion_crustacean"/>
</dbReference>
<dbReference type="InterPro" id="IPR017854">
    <property type="entry name" value="Metalthion_dom_sf"/>
</dbReference>
<dbReference type="PRINTS" id="PR00858">
    <property type="entry name" value="MTCRUSTACEAN"/>
</dbReference>
<dbReference type="SUPFAM" id="SSF57868">
    <property type="entry name" value="Metallothionein"/>
    <property type="match status" value="2"/>
</dbReference>
<evidence type="ECO:0000250" key="1">
    <source>
        <dbReference type="UniProtKB" id="P29499"/>
    </source>
</evidence>
<evidence type="ECO:0000269" key="2">
    <source>
    </source>
</evidence>
<evidence type="ECO:0000305" key="3"/>
<reference key="1">
    <citation type="journal article" date="1996" name="Biochem. J.">
        <title>Primary structures of decapod crustacean metallothioneins with special emphasis on freshwater and semi-terrestrial species.</title>
        <authorList>
            <person name="Pedersen S.N."/>
            <person name="Pedersen K.L."/>
            <person name="Hoejrup P."/>
            <person name="Depledge M.H."/>
            <person name="Knudsen J."/>
        </authorList>
    </citation>
    <scope>PROTEIN SEQUENCE</scope>
    <scope>MASS SPECTROMETRY</scope>
    <source>
        <tissue>Midgut</tissue>
    </source>
</reference>
<sequence>PDPCCAEGTCECEEGKCKAGCKCTSCRCSPCEKCTSECECKSKEECAKNCTKPCSCCP</sequence>
<accession>P55952</accession>
<comment type="function">
    <text>Metallothioneins have a high content of cysteine residues that bind various heavy metals. Class I MTS in crustacea are involved in the sequestration of elevated levels of heavy-metal ions.</text>
</comment>
<comment type="induction">
    <text>By cadmium.</text>
</comment>
<comment type="mass spectrometry"/>
<comment type="similarity">
    <text evidence="3">Belongs to the metallothionein superfamily. Type 3 family.</text>
</comment>
<protein>
    <recommendedName>
        <fullName>Metallothionein</fullName>
        <shortName>MT</shortName>
    </recommendedName>
</protein>
<name>MT_POTPO</name>
<proteinExistence type="evidence at protein level"/>